<dbReference type="EC" id="4.1.2.13"/>
<dbReference type="EMBL" id="BA000033">
    <property type="protein sequence ID" value="BAB96390.1"/>
    <property type="molecule type" value="Genomic_DNA"/>
</dbReference>
<dbReference type="RefSeq" id="WP_001031405.1">
    <property type="nucleotide sequence ID" value="NC_003923.1"/>
</dbReference>
<dbReference type="SMR" id="Q8NUM5"/>
<dbReference type="KEGG" id="sam:MW2525"/>
<dbReference type="HOGENOM" id="CLU_081560_0_0_9"/>
<dbReference type="UniPathway" id="UPA00109">
    <property type="reaction ID" value="UER00183"/>
</dbReference>
<dbReference type="GO" id="GO:0004332">
    <property type="term" value="F:fructose-bisphosphate aldolase activity"/>
    <property type="evidence" value="ECO:0007669"/>
    <property type="project" value="UniProtKB-UniRule"/>
</dbReference>
<dbReference type="GO" id="GO:0006096">
    <property type="term" value="P:glycolytic process"/>
    <property type="evidence" value="ECO:0007669"/>
    <property type="project" value="UniProtKB-UniRule"/>
</dbReference>
<dbReference type="Gene3D" id="3.20.20.70">
    <property type="entry name" value="Aldolase class I"/>
    <property type="match status" value="1"/>
</dbReference>
<dbReference type="HAMAP" id="MF_00729">
    <property type="entry name" value="FBP_aldolase_1"/>
    <property type="match status" value="1"/>
</dbReference>
<dbReference type="InterPro" id="IPR013785">
    <property type="entry name" value="Aldolase_TIM"/>
</dbReference>
<dbReference type="InterPro" id="IPR000741">
    <property type="entry name" value="FBA_I"/>
</dbReference>
<dbReference type="InterPro" id="IPR023014">
    <property type="entry name" value="FBA_I_Gram+-type"/>
</dbReference>
<dbReference type="NCBIfam" id="NF003784">
    <property type="entry name" value="PRK05377.1"/>
    <property type="match status" value="1"/>
</dbReference>
<dbReference type="PANTHER" id="PTHR11627">
    <property type="entry name" value="FRUCTOSE-BISPHOSPHATE ALDOLASE"/>
    <property type="match status" value="1"/>
</dbReference>
<dbReference type="Pfam" id="PF00274">
    <property type="entry name" value="Glycolytic"/>
    <property type="match status" value="1"/>
</dbReference>
<dbReference type="SUPFAM" id="SSF51569">
    <property type="entry name" value="Aldolase"/>
    <property type="match status" value="1"/>
</dbReference>
<accession>Q8NUM5</accession>
<protein>
    <recommendedName>
        <fullName>Fructose-bisphosphate aldolase class 1</fullName>
        <ecNumber>4.1.2.13</ecNumber>
    </recommendedName>
    <alternativeName>
        <fullName>Fructose-bisphosphate aldolase class I</fullName>
        <shortName>FBP aldolase</shortName>
    </alternativeName>
</protein>
<reference key="1">
    <citation type="journal article" date="2002" name="Lancet">
        <title>Genome and virulence determinants of high virulence community-acquired MRSA.</title>
        <authorList>
            <person name="Baba T."/>
            <person name="Takeuchi F."/>
            <person name="Kuroda M."/>
            <person name="Yuzawa H."/>
            <person name="Aoki K."/>
            <person name="Oguchi A."/>
            <person name="Nagai Y."/>
            <person name="Iwama N."/>
            <person name="Asano K."/>
            <person name="Naimi T."/>
            <person name="Kuroda H."/>
            <person name="Cui L."/>
            <person name="Yamamoto K."/>
            <person name="Hiramatsu K."/>
        </authorList>
    </citation>
    <scope>NUCLEOTIDE SEQUENCE [LARGE SCALE GENOMIC DNA]</scope>
    <source>
        <strain>MW2</strain>
    </source>
</reference>
<name>ALF1_STAAW</name>
<sequence>MNKEQLEKMKNGKGFIAALDQSGGSTPKALKEYGVNEDQYSNEDEMFQLVHDMRTRVVTSPSFSPDKILGAILFEQTMDREVEGKYTADYLADKGVVPFLKVDKGLAEEQNGVQLMKPIDNLDSLLDRANERHIFGTKMRSNILELNEQGIKDVVEQQFEVAKQIIAKGLVPIIEPEVNINAKDKAEIEKVLKAELKKGLDNLNADQLVMLKLTIPTEPNLYKELAEHPNVVRVVVLSGGYSREKANELLKDNAELIASFSRALASDLRAGQSKEEFDKALGDAVESIYDASVNKN</sequence>
<gene>
    <name type="primary">fda</name>
    <name type="ordered locus">MW2525</name>
</gene>
<evidence type="ECO:0000250" key="1"/>
<evidence type="ECO:0000305" key="2"/>
<proteinExistence type="inferred from homology"/>
<feature type="initiator methionine" description="Removed" evidence="1">
    <location>
        <position position="1"/>
    </location>
</feature>
<feature type="chain" id="PRO_0000216908" description="Fructose-bisphosphate aldolase class 1">
    <location>
        <begin position="2"/>
        <end position="296"/>
    </location>
</feature>
<feature type="active site" description="Proton acceptor" evidence="1">
    <location>
        <position position="175"/>
    </location>
</feature>
<feature type="active site" description="Schiff-base intermediate with dihydroxyacetone-P" evidence="1">
    <location>
        <position position="212"/>
    </location>
</feature>
<keyword id="KW-0324">Glycolysis</keyword>
<keyword id="KW-0456">Lyase</keyword>
<keyword id="KW-0704">Schiff base</keyword>
<organism>
    <name type="scientific">Staphylococcus aureus (strain MW2)</name>
    <dbReference type="NCBI Taxonomy" id="196620"/>
    <lineage>
        <taxon>Bacteria</taxon>
        <taxon>Bacillati</taxon>
        <taxon>Bacillota</taxon>
        <taxon>Bacilli</taxon>
        <taxon>Bacillales</taxon>
        <taxon>Staphylococcaceae</taxon>
        <taxon>Staphylococcus</taxon>
    </lineage>
</organism>
<comment type="catalytic activity">
    <reaction>
        <text>beta-D-fructose 1,6-bisphosphate = D-glyceraldehyde 3-phosphate + dihydroxyacetone phosphate</text>
        <dbReference type="Rhea" id="RHEA:14729"/>
        <dbReference type="ChEBI" id="CHEBI:32966"/>
        <dbReference type="ChEBI" id="CHEBI:57642"/>
        <dbReference type="ChEBI" id="CHEBI:59776"/>
        <dbReference type="EC" id="4.1.2.13"/>
    </reaction>
</comment>
<comment type="pathway">
    <text>Carbohydrate degradation; glycolysis; D-glyceraldehyde 3-phosphate and glycerone phosphate from D-glucose: step 4/4.</text>
</comment>
<comment type="similarity">
    <text evidence="2">Belongs to the class I fructose-bisphosphate aldolase family.</text>
</comment>